<proteinExistence type="evidence at protein level"/>
<protein>
    <recommendedName>
        <fullName>DNA polymerase delta catalytic subunit</fullName>
        <ecNumber evidence="1">2.7.7.7</ecNumber>
    </recommendedName>
    <alternativeName>
        <fullName evidence="4">3'-5' exodeoxyribonuclease</fullName>
        <ecNumber evidence="1">3.1.11.-</ecNumber>
    </alternativeName>
    <alternativeName>
        <fullName>DNA polymerase III</fullName>
    </alternativeName>
</protein>
<evidence type="ECO:0000250" key="1">
    <source>
        <dbReference type="UniProtKB" id="P15436"/>
    </source>
</evidence>
<evidence type="ECO:0000256" key="2">
    <source>
        <dbReference type="SAM" id="MobiDB-lite"/>
    </source>
</evidence>
<evidence type="ECO:0000269" key="3">
    <source>
    </source>
</evidence>
<evidence type="ECO:0000305" key="4"/>
<gene>
    <name type="primary">pol3</name>
    <name type="synonym">pold</name>
    <name type="ORF">SPBC336.04</name>
</gene>
<feature type="chain" id="PRO_0000046453" description="DNA polymerase delta catalytic subunit">
    <location>
        <begin position="1"/>
        <end position="1086"/>
    </location>
</feature>
<feature type="zinc finger region" description="CysA-type" evidence="1">
    <location>
        <begin position="993"/>
        <end position="1011"/>
    </location>
</feature>
<feature type="region of interest" description="Disordered" evidence="2">
    <location>
        <begin position="1"/>
        <end position="64"/>
    </location>
</feature>
<feature type="short sequence motif" description="CysB motif" evidence="1">
    <location>
        <begin position="1040"/>
        <end position="1058"/>
    </location>
</feature>
<feature type="compositionally biased region" description="Basic and acidic residues" evidence="2">
    <location>
        <begin position="29"/>
        <end position="58"/>
    </location>
</feature>
<feature type="binding site" evidence="1">
    <location>
        <position position="993"/>
    </location>
    <ligand>
        <name>Zn(2+)</name>
        <dbReference type="ChEBI" id="CHEBI:29105"/>
    </ligand>
</feature>
<feature type="binding site" evidence="1">
    <location>
        <position position="996"/>
    </location>
    <ligand>
        <name>Zn(2+)</name>
        <dbReference type="ChEBI" id="CHEBI:29105"/>
    </ligand>
</feature>
<feature type="binding site" evidence="1">
    <location>
        <position position="1008"/>
    </location>
    <ligand>
        <name>Zn(2+)</name>
        <dbReference type="ChEBI" id="CHEBI:29105"/>
    </ligand>
</feature>
<feature type="binding site" evidence="1">
    <location>
        <position position="1011"/>
    </location>
    <ligand>
        <name>Zn(2+)</name>
        <dbReference type="ChEBI" id="CHEBI:29105"/>
    </ligand>
</feature>
<feature type="binding site" evidence="1">
    <location>
        <position position="1040"/>
    </location>
    <ligand>
        <name>[4Fe-4S] cluster</name>
        <dbReference type="ChEBI" id="CHEBI:49883"/>
    </ligand>
</feature>
<feature type="binding site" evidence="1">
    <location>
        <position position="1043"/>
    </location>
    <ligand>
        <name>[4Fe-4S] cluster</name>
        <dbReference type="ChEBI" id="CHEBI:49883"/>
    </ligand>
</feature>
<feature type="binding site" evidence="1">
    <location>
        <position position="1053"/>
    </location>
    <ligand>
        <name>[4Fe-4S] cluster</name>
        <dbReference type="ChEBI" id="CHEBI:49883"/>
    </ligand>
</feature>
<feature type="binding site" evidence="1">
    <location>
        <position position="1058"/>
    </location>
    <ligand>
        <name>[4Fe-4S] cluster</name>
        <dbReference type="ChEBI" id="CHEBI:49883"/>
    </ligand>
</feature>
<feature type="sequence conflict" description="In Ref. 1; CAA41968." evidence="4" ref="1">
    <original>Q</original>
    <variation>E</variation>
    <location>
        <position position="102"/>
    </location>
</feature>
<feature type="sequence conflict" description="In Ref. 4; BAA87100." evidence="4" ref="4">
    <original>K</original>
    <variation>Q</variation>
    <location>
        <position position="290"/>
    </location>
</feature>
<feature type="sequence conflict" description="In Ref. 1; CAA41968." evidence="4" ref="1">
    <original>T</original>
    <variation>S</variation>
    <location>
        <position position="419"/>
    </location>
</feature>
<feature type="sequence conflict" description="In Ref. 1; CAA41968 and 2; AAA35303." evidence="4" ref="1 2">
    <original>R</original>
    <variation>C</variation>
    <location>
        <position position="545"/>
    </location>
</feature>
<feature type="sequence conflict" description="In Ref. 1; CAA41968." evidence="4" ref="1">
    <original>KLEFEKVY</original>
    <variation>NWSFST</variation>
    <location>
        <begin position="777"/>
        <end position="784"/>
    </location>
</feature>
<feature type="sequence conflict" description="In Ref. 1; CAA41968." evidence="4" ref="1">
    <original>L</original>
    <variation>H</variation>
    <location>
        <position position="866"/>
    </location>
</feature>
<name>DPOD_SCHPO</name>
<dbReference type="EC" id="2.7.7.7" evidence="1"/>
<dbReference type="EC" id="3.1.11.-" evidence="1"/>
<dbReference type="EMBL" id="X59278">
    <property type="protein sequence ID" value="CAA41968.1"/>
    <property type="molecule type" value="Genomic_DNA"/>
</dbReference>
<dbReference type="EMBL" id="L07734">
    <property type="protein sequence ID" value="AAA35303.1"/>
    <property type="molecule type" value="Genomic_DNA"/>
</dbReference>
<dbReference type="EMBL" id="CU329671">
    <property type="protein sequence ID" value="CAB58156.1"/>
    <property type="molecule type" value="Genomic_DNA"/>
</dbReference>
<dbReference type="EMBL" id="AB027796">
    <property type="protein sequence ID" value="BAA87100.1"/>
    <property type="molecule type" value="Genomic_DNA"/>
</dbReference>
<dbReference type="PIR" id="S19661">
    <property type="entry name" value="S19661"/>
</dbReference>
<dbReference type="PIR" id="T40242">
    <property type="entry name" value="T40242"/>
</dbReference>
<dbReference type="PIR" id="T43266">
    <property type="entry name" value="T43266"/>
</dbReference>
<dbReference type="RefSeq" id="NP_596124.1">
    <property type="nucleotide sequence ID" value="NM_001022042.2"/>
</dbReference>
<dbReference type="SMR" id="P30316"/>
<dbReference type="BioGRID" id="276786">
    <property type="interactions" value="38"/>
</dbReference>
<dbReference type="ComplexPortal" id="CPX-2100">
    <property type="entry name" value="DNA polymerase delta complex"/>
</dbReference>
<dbReference type="FunCoup" id="P30316">
    <property type="interactions" value="601"/>
</dbReference>
<dbReference type="IntAct" id="P30316">
    <property type="interactions" value="1"/>
</dbReference>
<dbReference type="STRING" id="284812.P30316"/>
<dbReference type="iPTMnet" id="P30316"/>
<dbReference type="PaxDb" id="4896-SPBC336.04.1"/>
<dbReference type="EnsemblFungi" id="SPBC336.04.1">
    <property type="protein sequence ID" value="SPBC336.04.1:pep"/>
    <property type="gene ID" value="SPBC336.04"/>
</dbReference>
<dbReference type="GeneID" id="2540255"/>
<dbReference type="KEGG" id="spo:2540255"/>
<dbReference type="PomBase" id="SPBC336.04"/>
<dbReference type="VEuPathDB" id="FungiDB:SPBC336.04"/>
<dbReference type="eggNOG" id="KOG0969">
    <property type="taxonomic scope" value="Eukaryota"/>
</dbReference>
<dbReference type="HOGENOM" id="CLU_000203_2_0_1"/>
<dbReference type="InParanoid" id="P30316"/>
<dbReference type="OMA" id="CNNCRPR"/>
<dbReference type="PhylomeDB" id="P30316"/>
<dbReference type="Reactome" id="R-SPO-110314">
    <property type="pathway name" value="Recognition of DNA damage by PCNA-containing replication complex"/>
</dbReference>
<dbReference type="Reactome" id="R-SPO-174437">
    <property type="pathway name" value="Removal of the Flap Intermediate from the C-strand"/>
</dbReference>
<dbReference type="Reactome" id="R-SPO-5358565">
    <property type="pathway name" value="Mismatch repair (MMR) directed by MSH2:MSH6 (MutSalpha)"/>
</dbReference>
<dbReference type="Reactome" id="R-SPO-5358606">
    <property type="pathway name" value="Mismatch repair (MMR) directed by MSH2:MSH3 (MutSbeta)"/>
</dbReference>
<dbReference type="Reactome" id="R-SPO-5651801">
    <property type="pathway name" value="PCNA-Dependent Long Patch Base Excision Repair"/>
</dbReference>
<dbReference type="Reactome" id="R-SPO-5656169">
    <property type="pathway name" value="Termination of translesion DNA synthesis"/>
</dbReference>
<dbReference type="Reactome" id="R-SPO-5696397">
    <property type="pathway name" value="Gap-filling DNA repair synthesis and ligation in GG-NER"/>
</dbReference>
<dbReference type="Reactome" id="R-SPO-5696400">
    <property type="pathway name" value="Dual Incision in GG-NER"/>
</dbReference>
<dbReference type="Reactome" id="R-SPO-6782135">
    <property type="pathway name" value="Dual incision in TC-NER"/>
</dbReference>
<dbReference type="Reactome" id="R-SPO-6782210">
    <property type="pathway name" value="Gap-filling DNA repair synthesis and ligation in TC-NER"/>
</dbReference>
<dbReference type="Reactome" id="R-SPO-69091">
    <property type="pathway name" value="Polymerase switching"/>
</dbReference>
<dbReference type="Reactome" id="R-SPO-69166">
    <property type="pathway name" value="Removal of the Flap Intermediate"/>
</dbReference>
<dbReference type="Reactome" id="R-SPO-69183">
    <property type="pathway name" value="Processive synthesis on the lagging strand"/>
</dbReference>
<dbReference type="PRO" id="PR:P30316"/>
<dbReference type="Proteomes" id="UP000002485">
    <property type="component" value="Chromosome II"/>
</dbReference>
<dbReference type="GO" id="GO:0140445">
    <property type="term" value="C:chromosome, telomeric repeat region"/>
    <property type="evidence" value="ECO:0000314"/>
    <property type="project" value="PomBase"/>
</dbReference>
<dbReference type="GO" id="GO:0043625">
    <property type="term" value="C:delta DNA polymerase complex"/>
    <property type="evidence" value="ECO:0000314"/>
    <property type="project" value="PomBase"/>
</dbReference>
<dbReference type="GO" id="GO:0005634">
    <property type="term" value="C:nucleus"/>
    <property type="evidence" value="ECO:0000314"/>
    <property type="project" value="PomBase"/>
</dbReference>
<dbReference type="GO" id="GO:0008296">
    <property type="term" value="F:3'-5'-DNA exonuclease activity"/>
    <property type="evidence" value="ECO:0000318"/>
    <property type="project" value="GO_Central"/>
</dbReference>
<dbReference type="GO" id="GO:0051539">
    <property type="term" value="F:4 iron, 4 sulfur cluster binding"/>
    <property type="evidence" value="ECO:0007669"/>
    <property type="project" value="UniProtKB-KW"/>
</dbReference>
<dbReference type="GO" id="GO:0003677">
    <property type="term" value="F:DNA binding"/>
    <property type="evidence" value="ECO:0000255"/>
    <property type="project" value="PomBase"/>
</dbReference>
<dbReference type="GO" id="GO:0003887">
    <property type="term" value="F:DNA-directed DNA polymerase activity"/>
    <property type="evidence" value="ECO:0000314"/>
    <property type="project" value="PomBase"/>
</dbReference>
<dbReference type="GO" id="GO:0000166">
    <property type="term" value="F:nucleotide binding"/>
    <property type="evidence" value="ECO:0007669"/>
    <property type="project" value="InterPro"/>
</dbReference>
<dbReference type="GO" id="GO:0008270">
    <property type="term" value="F:zinc ion binding"/>
    <property type="evidence" value="ECO:0007669"/>
    <property type="project" value="UniProtKB-KW"/>
</dbReference>
<dbReference type="GO" id="GO:0006287">
    <property type="term" value="P:base-excision repair, gap-filling"/>
    <property type="evidence" value="ECO:0000318"/>
    <property type="project" value="GO_Central"/>
</dbReference>
<dbReference type="GO" id="GO:0045004">
    <property type="term" value="P:DNA replication proofreading"/>
    <property type="evidence" value="ECO:0000318"/>
    <property type="project" value="GO_Central"/>
</dbReference>
<dbReference type="GO" id="GO:0006271">
    <property type="term" value="P:DNA strand elongation involved in DNA replication"/>
    <property type="evidence" value="ECO:0000303"/>
    <property type="project" value="ComplexPortal"/>
</dbReference>
<dbReference type="GO" id="GO:1902983">
    <property type="term" value="P:DNA strand elongation involved in mitotic DNA replication"/>
    <property type="evidence" value="ECO:0000314"/>
    <property type="project" value="PomBase"/>
</dbReference>
<dbReference type="GO" id="GO:1904161">
    <property type="term" value="P:DNA synthesis involved in UV-damage excision repair"/>
    <property type="evidence" value="ECO:0000314"/>
    <property type="project" value="PomBase"/>
</dbReference>
<dbReference type="GO" id="GO:0006261">
    <property type="term" value="P:DNA-templated DNA replication"/>
    <property type="evidence" value="ECO:0000318"/>
    <property type="project" value="GO_Central"/>
</dbReference>
<dbReference type="GO" id="GO:1903459">
    <property type="term" value="P:mitotic DNA replication lagging strand elongation"/>
    <property type="evidence" value="ECO:0000315"/>
    <property type="project" value="PomBase"/>
</dbReference>
<dbReference type="GO" id="GO:0006297">
    <property type="term" value="P:nucleotide-excision repair, DNA gap filling"/>
    <property type="evidence" value="ECO:0000318"/>
    <property type="project" value="GO_Central"/>
</dbReference>
<dbReference type="CDD" id="cd05777">
    <property type="entry name" value="DNA_polB_delta_exo"/>
    <property type="match status" value="1"/>
</dbReference>
<dbReference type="CDD" id="cd05533">
    <property type="entry name" value="POLBc_delta"/>
    <property type="match status" value="1"/>
</dbReference>
<dbReference type="FunFam" id="1.10.132.60:FF:000001">
    <property type="entry name" value="DNA polymerase"/>
    <property type="match status" value="1"/>
</dbReference>
<dbReference type="FunFam" id="1.10.287.690:FF:000001">
    <property type="entry name" value="DNA polymerase"/>
    <property type="match status" value="1"/>
</dbReference>
<dbReference type="FunFam" id="2.40.50.730:FF:000004">
    <property type="entry name" value="DNA polymerase"/>
    <property type="match status" value="1"/>
</dbReference>
<dbReference type="FunFam" id="3.30.342.10:FF:000009">
    <property type="entry name" value="DNA polymerase"/>
    <property type="match status" value="1"/>
</dbReference>
<dbReference type="FunFam" id="3.30.420.10:FF:000004">
    <property type="entry name" value="DNA polymerase"/>
    <property type="match status" value="1"/>
</dbReference>
<dbReference type="Gene3D" id="1.10.132.60">
    <property type="entry name" value="DNA polymerase family B, C-terminal domain"/>
    <property type="match status" value="1"/>
</dbReference>
<dbReference type="Gene3D" id="3.30.342.10">
    <property type="entry name" value="DNA Polymerase, chain B, domain 1"/>
    <property type="match status" value="1"/>
</dbReference>
<dbReference type="Gene3D" id="1.10.287.690">
    <property type="entry name" value="Helix hairpin bin"/>
    <property type="match status" value="1"/>
</dbReference>
<dbReference type="Gene3D" id="3.90.1600.10">
    <property type="entry name" value="Palm domain of DNA polymerase"/>
    <property type="match status" value="1"/>
</dbReference>
<dbReference type="Gene3D" id="3.30.420.10">
    <property type="entry name" value="Ribonuclease H-like superfamily/Ribonuclease H"/>
    <property type="match status" value="1"/>
</dbReference>
<dbReference type="InterPro" id="IPR006172">
    <property type="entry name" value="DNA-dir_DNA_pol_B"/>
</dbReference>
<dbReference type="InterPro" id="IPR017964">
    <property type="entry name" value="DNA-dir_DNA_pol_B_CS"/>
</dbReference>
<dbReference type="InterPro" id="IPR006133">
    <property type="entry name" value="DNA-dir_DNA_pol_B_exonuc"/>
</dbReference>
<dbReference type="InterPro" id="IPR006134">
    <property type="entry name" value="DNA-dir_DNA_pol_B_multi_dom"/>
</dbReference>
<dbReference type="InterPro" id="IPR043502">
    <property type="entry name" value="DNA/RNA_pol_sf"/>
</dbReference>
<dbReference type="InterPro" id="IPR042087">
    <property type="entry name" value="DNA_pol_B_thumb"/>
</dbReference>
<dbReference type="InterPro" id="IPR023211">
    <property type="entry name" value="DNA_pol_palm_dom_sf"/>
</dbReference>
<dbReference type="InterPro" id="IPR050240">
    <property type="entry name" value="DNA_pol_type-B"/>
</dbReference>
<dbReference type="InterPro" id="IPR056435">
    <property type="entry name" value="DPOD/Z_N"/>
</dbReference>
<dbReference type="InterPro" id="IPR012337">
    <property type="entry name" value="RNaseH-like_sf"/>
</dbReference>
<dbReference type="InterPro" id="IPR036397">
    <property type="entry name" value="RNaseH_sf"/>
</dbReference>
<dbReference type="InterPro" id="IPR025687">
    <property type="entry name" value="Znf-C4pol"/>
</dbReference>
<dbReference type="NCBIfam" id="TIGR00592">
    <property type="entry name" value="pol2"/>
    <property type="match status" value="1"/>
</dbReference>
<dbReference type="PANTHER" id="PTHR10322">
    <property type="entry name" value="DNA POLYMERASE CATALYTIC SUBUNIT"/>
    <property type="match status" value="1"/>
</dbReference>
<dbReference type="PANTHER" id="PTHR10322:SF23">
    <property type="entry name" value="DNA POLYMERASE DELTA CATALYTIC SUBUNIT"/>
    <property type="match status" value="1"/>
</dbReference>
<dbReference type="Pfam" id="PF00136">
    <property type="entry name" value="DNA_pol_B"/>
    <property type="match status" value="1"/>
</dbReference>
<dbReference type="Pfam" id="PF03104">
    <property type="entry name" value="DNA_pol_B_exo1"/>
    <property type="match status" value="1"/>
</dbReference>
<dbReference type="Pfam" id="PF24055">
    <property type="entry name" value="POL3_N"/>
    <property type="match status" value="1"/>
</dbReference>
<dbReference type="Pfam" id="PF14260">
    <property type="entry name" value="zf-C4pol"/>
    <property type="match status" value="1"/>
</dbReference>
<dbReference type="PRINTS" id="PR00106">
    <property type="entry name" value="DNAPOLB"/>
</dbReference>
<dbReference type="SMART" id="SM00486">
    <property type="entry name" value="POLBc"/>
    <property type="match status" value="1"/>
</dbReference>
<dbReference type="SUPFAM" id="SSF56672">
    <property type="entry name" value="DNA/RNA polymerases"/>
    <property type="match status" value="1"/>
</dbReference>
<dbReference type="SUPFAM" id="SSF53098">
    <property type="entry name" value="Ribonuclease H-like"/>
    <property type="match status" value="1"/>
</dbReference>
<dbReference type="PROSITE" id="PS00116">
    <property type="entry name" value="DNA_POLYMERASE_B"/>
    <property type="match status" value="1"/>
</dbReference>
<comment type="function">
    <text evidence="1 3">Catalytic component of DNA polymerase delta (DNA polymerase III) which participates in chromosomal DNA replication (PubMed:31488849). Required during synthesis of the lagging DNA strands at the replication fork, binds at/or near replication origins and moves along DNA with the replication fork (PubMed:31488849). Participates in leading strand synthesis during replication initiation and termination (PubMed:31488849). Has 3'-5' proofreading exonuclease activity that corrects errors arising during DNA replication (By similarity).</text>
</comment>
<comment type="catalytic activity">
    <reaction evidence="1">
        <text>DNA(n) + a 2'-deoxyribonucleoside 5'-triphosphate = DNA(n+1) + diphosphate</text>
        <dbReference type="Rhea" id="RHEA:22508"/>
        <dbReference type="Rhea" id="RHEA-COMP:17339"/>
        <dbReference type="Rhea" id="RHEA-COMP:17340"/>
        <dbReference type="ChEBI" id="CHEBI:33019"/>
        <dbReference type="ChEBI" id="CHEBI:61560"/>
        <dbReference type="ChEBI" id="CHEBI:173112"/>
        <dbReference type="EC" id="2.7.7.7"/>
    </reaction>
</comment>
<comment type="cofactor">
    <cofactor evidence="1">
        <name>[4Fe-4S] cluster</name>
        <dbReference type="ChEBI" id="CHEBI:49883"/>
    </cofactor>
    <text evidence="1">Binds 1 [4Fe-4S] cluster.</text>
</comment>
<comment type="subunit">
    <text>Heterotetramer that consist of the pol3, cdc1, cdc27 and cdm1 subunits. The pol3 subunit contains the polymerase active site and most likely the active site for the 3'-5' exonuclease activity.</text>
</comment>
<comment type="interaction">
    <interactant intactId="EBI-865207">
        <id>P30316</id>
    </interactant>
    <interactant intactId="EBI-865227">
        <id>P87324</id>
        <label>cdc1</label>
    </interactant>
    <organismsDiffer>false</organismsDiffer>
    <experiments>2</experiments>
</comment>
<comment type="subcellular location">
    <subcellularLocation>
        <location>Nucleus</location>
    </subcellularLocation>
</comment>
<comment type="domain">
    <text evidence="1">The CysB motif binds 1 4Fe-4S cluster and is required for the formation of polymerase complexes.</text>
</comment>
<comment type="miscellaneous">
    <text>In eukaryotes there are five DNA polymerases: alpha, beta, gamma, delta, and epsilon which are responsible for different reactions of DNA synthesis.</text>
</comment>
<comment type="similarity">
    <text evidence="4">Belongs to the DNA polymerase type-B family.</text>
</comment>
<keyword id="KW-0004">4Fe-4S</keyword>
<keyword id="KW-0235">DNA replication</keyword>
<keyword id="KW-0238">DNA-binding</keyword>
<keyword id="KW-0239">DNA-directed DNA polymerase</keyword>
<keyword id="KW-0269">Exonuclease</keyword>
<keyword id="KW-0378">Hydrolase</keyword>
<keyword id="KW-0408">Iron</keyword>
<keyword id="KW-0411">Iron-sulfur</keyword>
<keyword id="KW-0479">Metal-binding</keyword>
<keyword id="KW-0540">Nuclease</keyword>
<keyword id="KW-0548">Nucleotidyltransferase</keyword>
<keyword id="KW-0539">Nucleus</keyword>
<keyword id="KW-1185">Reference proteome</keyword>
<keyword id="KW-0808">Transferase</keyword>
<keyword id="KW-0862">Zinc</keyword>
<keyword id="KW-0863">Zinc-finger</keyword>
<reference key="1">
    <citation type="journal article" date="1991" name="J. Mol. Biol.">
        <title>Characterization of the POL3 gene product from Schizosaccharomyces pombe indicates inter-species conservation of the catalytic subunit of DNA polymerase delta.</title>
        <authorList>
            <person name="Pignede G."/>
            <person name="Bouvier D."/>
            <person name="de Recondo A.-M."/>
            <person name="Baldacci G."/>
        </authorList>
    </citation>
    <scope>NUCLEOTIDE SEQUENCE [GENOMIC DNA]</scope>
</reference>
<reference key="2">
    <citation type="journal article" date="1993" name="Mol. Biol. Cell">
        <title>Cell cycle expression of two replicative DNA polymerases alpha and delta from Schizosaccharomyces pombe.</title>
        <authorList>
            <person name="Park H."/>
            <person name="Francesconi S."/>
            <person name="Wang T.S.F."/>
        </authorList>
    </citation>
    <scope>NUCLEOTIDE SEQUENCE [GENOMIC DNA]</scope>
</reference>
<reference key="3">
    <citation type="journal article" date="2002" name="Nature">
        <title>The genome sequence of Schizosaccharomyces pombe.</title>
        <authorList>
            <person name="Wood V."/>
            <person name="Gwilliam R."/>
            <person name="Rajandream M.A."/>
            <person name="Lyne M.H."/>
            <person name="Lyne R."/>
            <person name="Stewart A."/>
            <person name="Sgouros J.G."/>
            <person name="Peat N."/>
            <person name="Hayles J."/>
            <person name="Baker S.G."/>
            <person name="Basham D."/>
            <person name="Bowman S."/>
            <person name="Brooks K."/>
            <person name="Brown D."/>
            <person name="Brown S."/>
            <person name="Chillingworth T."/>
            <person name="Churcher C.M."/>
            <person name="Collins M."/>
            <person name="Connor R."/>
            <person name="Cronin A."/>
            <person name="Davis P."/>
            <person name="Feltwell T."/>
            <person name="Fraser A."/>
            <person name="Gentles S."/>
            <person name="Goble A."/>
            <person name="Hamlin N."/>
            <person name="Harris D.E."/>
            <person name="Hidalgo J."/>
            <person name="Hodgson G."/>
            <person name="Holroyd S."/>
            <person name="Hornsby T."/>
            <person name="Howarth S."/>
            <person name="Huckle E.J."/>
            <person name="Hunt S."/>
            <person name="Jagels K."/>
            <person name="James K.D."/>
            <person name="Jones L."/>
            <person name="Jones M."/>
            <person name="Leather S."/>
            <person name="McDonald S."/>
            <person name="McLean J."/>
            <person name="Mooney P."/>
            <person name="Moule S."/>
            <person name="Mungall K.L."/>
            <person name="Murphy L.D."/>
            <person name="Niblett D."/>
            <person name="Odell C."/>
            <person name="Oliver K."/>
            <person name="O'Neil S."/>
            <person name="Pearson D."/>
            <person name="Quail M.A."/>
            <person name="Rabbinowitsch E."/>
            <person name="Rutherford K.M."/>
            <person name="Rutter S."/>
            <person name="Saunders D."/>
            <person name="Seeger K."/>
            <person name="Sharp S."/>
            <person name="Skelton J."/>
            <person name="Simmonds M.N."/>
            <person name="Squares R."/>
            <person name="Squares S."/>
            <person name="Stevens K."/>
            <person name="Taylor K."/>
            <person name="Taylor R.G."/>
            <person name="Tivey A."/>
            <person name="Walsh S.V."/>
            <person name="Warren T."/>
            <person name="Whitehead S."/>
            <person name="Woodward J.R."/>
            <person name="Volckaert G."/>
            <person name="Aert R."/>
            <person name="Robben J."/>
            <person name="Grymonprez B."/>
            <person name="Weltjens I."/>
            <person name="Vanstreels E."/>
            <person name="Rieger M."/>
            <person name="Schaefer M."/>
            <person name="Mueller-Auer S."/>
            <person name="Gabel C."/>
            <person name="Fuchs M."/>
            <person name="Duesterhoeft A."/>
            <person name="Fritzc C."/>
            <person name="Holzer E."/>
            <person name="Moestl D."/>
            <person name="Hilbert H."/>
            <person name="Borzym K."/>
            <person name="Langer I."/>
            <person name="Beck A."/>
            <person name="Lehrach H."/>
            <person name="Reinhardt R."/>
            <person name="Pohl T.M."/>
            <person name="Eger P."/>
            <person name="Zimmermann W."/>
            <person name="Wedler H."/>
            <person name="Wambutt R."/>
            <person name="Purnelle B."/>
            <person name="Goffeau A."/>
            <person name="Cadieu E."/>
            <person name="Dreano S."/>
            <person name="Gloux S."/>
            <person name="Lelaure V."/>
            <person name="Mottier S."/>
            <person name="Galibert F."/>
            <person name="Aves S.J."/>
            <person name="Xiang Z."/>
            <person name="Hunt C."/>
            <person name="Moore K."/>
            <person name="Hurst S.M."/>
            <person name="Lucas M."/>
            <person name="Rochet M."/>
            <person name="Gaillardin C."/>
            <person name="Tallada V.A."/>
            <person name="Garzon A."/>
            <person name="Thode G."/>
            <person name="Daga R.R."/>
            <person name="Cruzado L."/>
            <person name="Jimenez J."/>
            <person name="Sanchez M."/>
            <person name="del Rey F."/>
            <person name="Benito J."/>
            <person name="Dominguez A."/>
            <person name="Revuelta J.L."/>
            <person name="Moreno S."/>
            <person name="Armstrong J."/>
            <person name="Forsburg S.L."/>
            <person name="Cerutti L."/>
            <person name="Lowe T."/>
            <person name="McCombie W.R."/>
            <person name="Paulsen I."/>
            <person name="Potashkin J."/>
            <person name="Shpakovski G.V."/>
            <person name="Ussery D."/>
            <person name="Barrell B.G."/>
            <person name="Nurse P."/>
        </authorList>
    </citation>
    <scope>NUCLEOTIDE SEQUENCE [LARGE SCALE GENOMIC DNA]</scope>
    <source>
        <strain>972 / ATCC 24843</strain>
    </source>
</reference>
<reference key="4">
    <citation type="journal article" date="2000" name="Genes Cells">
        <title>Large-scale screening of intracellular protein localization in living fission yeast cells by the use of a GFP-fusion genomic DNA library.</title>
        <authorList>
            <person name="Ding D.-Q."/>
            <person name="Tomita Y."/>
            <person name="Yamamoto A."/>
            <person name="Chikashige Y."/>
            <person name="Haraguchi T."/>
            <person name="Hiraoka Y."/>
        </authorList>
    </citation>
    <scope>NUCLEOTIDE SEQUENCE [LARGE SCALE GENOMIC DNA] OF 272-455</scope>
    <source>
        <strain>ATCC 38364 / 968</strain>
    </source>
</reference>
<reference key="5">
    <citation type="journal article" date="2019" name="Nat. Commun.">
        <title>Roles for DNA polymerase delta in initiating and terminating leading strand DNA replication.</title>
        <authorList>
            <person name="Zhou Z.X."/>
            <person name="Lujan S.A."/>
            <person name="Burkholder A.B."/>
            <person name="Garbacz M.A."/>
            <person name="Kunkel T.A."/>
        </authorList>
    </citation>
    <scope>FUNCTION</scope>
</reference>
<organism>
    <name type="scientific">Schizosaccharomyces pombe (strain 972 / ATCC 24843)</name>
    <name type="common">Fission yeast</name>
    <dbReference type="NCBI Taxonomy" id="284812"/>
    <lineage>
        <taxon>Eukaryota</taxon>
        <taxon>Fungi</taxon>
        <taxon>Dikarya</taxon>
        <taxon>Ascomycota</taxon>
        <taxon>Taphrinomycotina</taxon>
        <taxon>Schizosaccharomycetes</taxon>
        <taxon>Schizosaccharomycetales</taxon>
        <taxon>Schizosaccharomycetaceae</taxon>
        <taxon>Schizosaccharomyces</taxon>
    </lineage>
</organism>
<accession>P30316</accession>
<accession>Q10016</accession>
<accession>Q9USU0</accession>
<accession>Q9UU61</accession>
<sequence>MTDRSSNEGVVLNKENYPFPRRNGSIHGEITDVKRRRLSERNGYGDKKGSSSKEKTSSFEDELAEYASQLDQDEIKSSKDQQWQRPALPAINPEKDDIYFQQIDSEEFTEGSVPSIRLFGVTDNGNSILVHVVGFLPYFYVKAPVGFRPEMLERFTQDLDATCNGGVIDHCIIEMKENLYGFQGNEKSPFIKIFTTNPRILSRARNVFERGEFNFEELFPVGVGVTTFESNTQYLLRFMIDCDVVGMNWIHLPASKYQFRYQNRVSNCQIEAWINYKDLISLPAEGQWSKMAPLRIMSFDIECAGRKGVFPDPSIDPVIQIASIVTQYGDSTPFVRNVFCVDTCSQIVGTQVYEFQNQAEMLSSWSKFVRDVDPDVLIGYNICNFDIPYLLDRAKSLRIHNFPLLGRIHNFFSVAKETTFSSKAYGTRESKTTSIPGRLQLDMLQVMQRDFKLRSYSLNAVCSQFLGEQKEDVHYSIITDLQNGTADSRRRLAIYCLKDAYLPQRLMDKLMCFVNYTEMARVTGVPFNFLLARGQQIKVISQLFRKALQHDLVVPNIRVNGTDEQYEGATVIEPIKGYYDTPIATLDFSSLYPSIMQAHNLCYTTLLDSNTAELLKLKQDVDYSVTPNGDYFVKPHVRKGLLPIILADLLNARKKAKADLKKETDPFKKAVLDGRQLALKVSANSVYGFTGATNGRLPCLAISSSVTSYGRQMIEKTKDVVEKRYRIENGYSHDAVVIYGDTDSVMVKFGVKTLPEAMKLGEEAANYVSDQFPNPIKLEFEKVYFPYLLISKKRYAGLFWTRTDTYDKMDSKGIETVRRDNCPLVSYVIDTALRKMLIDQDVEGAQLFTKKVISDLLQNKIDMSQLVITKALSKTDYAAKMAHVELAERMRKRDAGSAPAIGDRVAYVIIKGAQGDQFYMRSEDPIYVLENNIPIDAKYYLENQLSKPLLRIFEPILGEKASSLLHGDHTRTISMAAPSVGGIMKFAVKVETCLGCKAPIKKGKTALCENCLNRSAELYQRQVAQVNDLEVRFARLWTQCQRCQGSMHQDVICTSRDCPIFYMRIAEHKKLQQSVDLLKRFDEMSW</sequence>